<accession>Q3B1E7</accession>
<comment type="function">
    <text evidence="1">Catalyzes the decarboxylation of four acetate groups of uroporphyrinogen-III to yield coproporphyrinogen-III.</text>
</comment>
<comment type="catalytic activity">
    <reaction evidence="1">
        <text>uroporphyrinogen III + 4 H(+) = coproporphyrinogen III + 4 CO2</text>
        <dbReference type="Rhea" id="RHEA:19865"/>
        <dbReference type="ChEBI" id="CHEBI:15378"/>
        <dbReference type="ChEBI" id="CHEBI:16526"/>
        <dbReference type="ChEBI" id="CHEBI:57308"/>
        <dbReference type="ChEBI" id="CHEBI:57309"/>
        <dbReference type="EC" id="4.1.1.37"/>
    </reaction>
</comment>
<comment type="pathway">
    <text evidence="1">Porphyrin-containing compound metabolism; protoporphyrin-IX biosynthesis; coproporphyrinogen-III from 5-aminolevulinate: step 4/4.</text>
</comment>
<comment type="subunit">
    <text evidence="1">Homodimer.</text>
</comment>
<comment type="subcellular location">
    <subcellularLocation>
        <location evidence="1">Cytoplasm</location>
    </subcellularLocation>
</comment>
<comment type="similarity">
    <text evidence="1">Belongs to the uroporphyrinogen decarboxylase family.</text>
</comment>
<name>DCUP_CHLL3</name>
<dbReference type="EC" id="4.1.1.37" evidence="1"/>
<dbReference type="EMBL" id="CP000096">
    <property type="protein sequence ID" value="ABB24834.1"/>
    <property type="molecule type" value="Genomic_DNA"/>
</dbReference>
<dbReference type="RefSeq" id="WP_011358704.1">
    <property type="nucleotide sequence ID" value="NC_007512.1"/>
</dbReference>
<dbReference type="SMR" id="Q3B1E7"/>
<dbReference type="STRING" id="319225.Plut_1992"/>
<dbReference type="KEGG" id="plt:Plut_1992"/>
<dbReference type="eggNOG" id="COG0407">
    <property type="taxonomic scope" value="Bacteria"/>
</dbReference>
<dbReference type="HOGENOM" id="CLU_040933_0_0_10"/>
<dbReference type="OrthoDB" id="9806656at2"/>
<dbReference type="UniPathway" id="UPA00251">
    <property type="reaction ID" value="UER00321"/>
</dbReference>
<dbReference type="Proteomes" id="UP000002709">
    <property type="component" value="Chromosome"/>
</dbReference>
<dbReference type="GO" id="GO:0005829">
    <property type="term" value="C:cytosol"/>
    <property type="evidence" value="ECO:0007669"/>
    <property type="project" value="TreeGrafter"/>
</dbReference>
<dbReference type="GO" id="GO:0004853">
    <property type="term" value="F:uroporphyrinogen decarboxylase activity"/>
    <property type="evidence" value="ECO:0007669"/>
    <property type="project" value="UniProtKB-UniRule"/>
</dbReference>
<dbReference type="GO" id="GO:0006782">
    <property type="term" value="P:protoporphyrinogen IX biosynthetic process"/>
    <property type="evidence" value="ECO:0007669"/>
    <property type="project" value="UniProtKB-UniRule"/>
</dbReference>
<dbReference type="CDD" id="cd00717">
    <property type="entry name" value="URO-D"/>
    <property type="match status" value="1"/>
</dbReference>
<dbReference type="FunFam" id="3.20.20.210:FF:000001">
    <property type="entry name" value="Uroporphyrinogen decarboxylase"/>
    <property type="match status" value="1"/>
</dbReference>
<dbReference type="Gene3D" id="3.20.20.210">
    <property type="match status" value="1"/>
</dbReference>
<dbReference type="HAMAP" id="MF_00218">
    <property type="entry name" value="URO_D"/>
    <property type="match status" value="1"/>
</dbReference>
<dbReference type="InterPro" id="IPR038071">
    <property type="entry name" value="UROD/MetE-like_sf"/>
</dbReference>
<dbReference type="InterPro" id="IPR006361">
    <property type="entry name" value="Uroporphyrinogen_deCO2ase_HemE"/>
</dbReference>
<dbReference type="InterPro" id="IPR000257">
    <property type="entry name" value="Uroporphyrinogen_deCOase"/>
</dbReference>
<dbReference type="NCBIfam" id="TIGR01464">
    <property type="entry name" value="hemE"/>
    <property type="match status" value="1"/>
</dbReference>
<dbReference type="PANTHER" id="PTHR21091">
    <property type="entry name" value="METHYLTETRAHYDROFOLATE:HOMOCYSTEINE METHYLTRANSFERASE RELATED"/>
    <property type="match status" value="1"/>
</dbReference>
<dbReference type="PANTHER" id="PTHR21091:SF169">
    <property type="entry name" value="UROPORPHYRINOGEN DECARBOXYLASE"/>
    <property type="match status" value="1"/>
</dbReference>
<dbReference type="Pfam" id="PF01208">
    <property type="entry name" value="URO-D"/>
    <property type="match status" value="1"/>
</dbReference>
<dbReference type="SUPFAM" id="SSF51726">
    <property type="entry name" value="UROD/MetE-like"/>
    <property type="match status" value="1"/>
</dbReference>
<dbReference type="PROSITE" id="PS00906">
    <property type="entry name" value="UROD_1"/>
    <property type="match status" value="1"/>
</dbReference>
<dbReference type="PROSITE" id="PS00907">
    <property type="entry name" value="UROD_2"/>
    <property type="match status" value="1"/>
</dbReference>
<feature type="chain" id="PRO_1000023935" description="Uroporphyrinogen decarboxylase">
    <location>
        <begin position="1"/>
        <end position="351"/>
    </location>
</feature>
<feature type="binding site" evidence="1">
    <location>
        <begin position="25"/>
        <end position="29"/>
    </location>
    <ligand>
        <name>substrate</name>
    </ligand>
</feature>
<feature type="binding site" evidence="1">
    <location>
        <position position="74"/>
    </location>
    <ligand>
        <name>substrate</name>
    </ligand>
</feature>
<feature type="binding site" evidence="1">
    <location>
        <position position="151"/>
    </location>
    <ligand>
        <name>substrate</name>
    </ligand>
</feature>
<feature type="binding site" evidence="1">
    <location>
        <position position="206"/>
    </location>
    <ligand>
        <name>substrate</name>
    </ligand>
</feature>
<feature type="binding site" evidence="1">
    <location>
        <position position="325"/>
    </location>
    <ligand>
        <name>substrate</name>
    </ligand>
</feature>
<feature type="site" description="Transition state stabilizer" evidence="1">
    <location>
        <position position="74"/>
    </location>
</feature>
<gene>
    <name evidence="1" type="primary">hemE</name>
    <name type="ordered locus">Plut_1992</name>
</gene>
<proteinExistence type="inferred from homology"/>
<sequence length="351" mass="39042">MLKNDLFLRALKRQPCSRTPIWVMRQAGRYLPEYRAIREKTDFLTLCKTPELAMEVTIQPVELMGVDAAIIFSDILVVNEAMGMDVEIIETKGIKLTPPIRSQADINRLIIPEVQDKLGYVLDAIRLTKKVLDNRVPLIGFSGAAWTLFTYAVEGGGSKNYAFAKKMMYREPKMAHMLLSKISAVISEYVCAQVEAGADAIQIFDSWASALSEDDYREFALPYIKENVQAVKAKYPDVPVIVFSKDCNTILSEIADTGCDAVGLGWGIDIKKARTILGDRVCLQGNMDPTVLYGTPEKIKAEAAKVLRQFGQHTAQSGHVFNLGHGILPDVDPANLKLLVEFVKEESAKYH</sequence>
<protein>
    <recommendedName>
        <fullName evidence="1">Uroporphyrinogen decarboxylase</fullName>
        <shortName evidence="1">UPD</shortName>
        <shortName evidence="1">URO-D</shortName>
        <ecNumber evidence="1">4.1.1.37</ecNumber>
    </recommendedName>
</protein>
<reference key="1">
    <citation type="submission" date="2005-08" db="EMBL/GenBank/DDBJ databases">
        <title>Complete sequence of Pelodictyon luteolum DSM 273.</title>
        <authorList>
            <consortium name="US DOE Joint Genome Institute"/>
            <person name="Copeland A."/>
            <person name="Lucas S."/>
            <person name="Lapidus A."/>
            <person name="Barry K."/>
            <person name="Detter J.C."/>
            <person name="Glavina T."/>
            <person name="Hammon N."/>
            <person name="Israni S."/>
            <person name="Pitluck S."/>
            <person name="Bryant D."/>
            <person name="Schmutz J."/>
            <person name="Larimer F."/>
            <person name="Land M."/>
            <person name="Kyrpides N."/>
            <person name="Ivanova N."/>
            <person name="Richardson P."/>
        </authorList>
    </citation>
    <scope>NUCLEOTIDE SEQUENCE [LARGE SCALE GENOMIC DNA]</scope>
    <source>
        <strain>DSM 273 / BCRC 81028 / 2530</strain>
    </source>
</reference>
<keyword id="KW-0963">Cytoplasm</keyword>
<keyword id="KW-0210">Decarboxylase</keyword>
<keyword id="KW-0456">Lyase</keyword>
<keyword id="KW-0627">Porphyrin biosynthesis</keyword>
<keyword id="KW-1185">Reference proteome</keyword>
<organism>
    <name type="scientific">Chlorobium luteolum (strain DSM 273 / BCRC 81028 / 2530)</name>
    <name type="common">Pelodictyon luteolum</name>
    <dbReference type="NCBI Taxonomy" id="319225"/>
    <lineage>
        <taxon>Bacteria</taxon>
        <taxon>Pseudomonadati</taxon>
        <taxon>Chlorobiota</taxon>
        <taxon>Chlorobiia</taxon>
        <taxon>Chlorobiales</taxon>
        <taxon>Chlorobiaceae</taxon>
        <taxon>Chlorobium/Pelodictyon group</taxon>
        <taxon>Pelodictyon</taxon>
    </lineage>
</organism>
<evidence type="ECO:0000255" key="1">
    <source>
        <dbReference type="HAMAP-Rule" id="MF_00218"/>
    </source>
</evidence>